<evidence type="ECO:0000255" key="1">
    <source>
        <dbReference type="HAMAP-Rule" id="MF_00005"/>
    </source>
</evidence>
<accession>A3Q0T3</accession>
<proteinExistence type="inferred from homology"/>
<keyword id="KW-0028">Amino-acid biosynthesis</keyword>
<keyword id="KW-0055">Arginine biosynthesis</keyword>
<keyword id="KW-0067">ATP-binding</keyword>
<keyword id="KW-0963">Cytoplasm</keyword>
<keyword id="KW-0436">Ligase</keyword>
<keyword id="KW-0547">Nucleotide-binding</keyword>
<reference key="1">
    <citation type="submission" date="2007-02" db="EMBL/GenBank/DDBJ databases">
        <title>Complete sequence of Mycobacterium sp. JLS.</title>
        <authorList>
            <consortium name="US DOE Joint Genome Institute"/>
            <person name="Copeland A."/>
            <person name="Lucas S."/>
            <person name="Lapidus A."/>
            <person name="Barry K."/>
            <person name="Detter J.C."/>
            <person name="Glavina del Rio T."/>
            <person name="Hammon N."/>
            <person name="Israni S."/>
            <person name="Dalin E."/>
            <person name="Tice H."/>
            <person name="Pitluck S."/>
            <person name="Chain P."/>
            <person name="Malfatti S."/>
            <person name="Shin M."/>
            <person name="Vergez L."/>
            <person name="Schmutz J."/>
            <person name="Larimer F."/>
            <person name="Land M."/>
            <person name="Hauser L."/>
            <person name="Kyrpides N."/>
            <person name="Mikhailova N."/>
            <person name="Miller C.D."/>
            <person name="Anderson A.J."/>
            <person name="Sims R.C."/>
            <person name="Richardson P."/>
        </authorList>
    </citation>
    <scope>NUCLEOTIDE SEQUENCE [LARGE SCALE GENOMIC DNA]</scope>
    <source>
        <strain>JLS</strain>
    </source>
</reference>
<comment type="catalytic activity">
    <reaction evidence="1">
        <text>L-citrulline + L-aspartate + ATP = 2-(N(omega)-L-arginino)succinate + AMP + diphosphate + H(+)</text>
        <dbReference type="Rhea" id="RHEA:10932"/>
        <dbReference type="ChEBI" id="CHEBI:15378"/>
        <dbReference type="ChEBI" id="CHEBI:29991"/>
        <dbReference type="ChEBI" id="CHEBI:30616"/>
        <dbReference type="ChEBI" id="CHEBI:33019"/>
        <dbReference type="ChEBI" id="CHEBI:57472"/>
        <dbReference type="ChEBI" id="CHEBI:57743"/>
        <dbReference type="ChEBI" id="CHEBI:456215"/>
        <dbReference type="EC" id="6.3.4.5"/>
    </reaction>
</comment>
<comment type="pathway">
    <text evidence="1">Amino-acid biosynthesis; L-arginine biosynthesis; L-arginine from L-ornithine and carbamoyl phosphate: step 2/3.</text>
</comment>
<comment type="subunit">
    <text evidence="1">Homotetramer.</text>
</comment>
<comment type="subcellular location">
    <subcellularLocation>
        <location evidence="1">Cytoplasm</location>
    </subcellularLocation>
</comment>
<comment type="similarity">
    <text evidence="1">Belongs to the argininosuccinate synthase family. Type 1 subfamily.</text>
</comment>
<dbReference type="EC" id="6.3.4.5" evidence="1"/>
<dbReference type="EMBL" id="CP000580">
    <property type="protein sequence ID" value="ABN98760.1"/>
    <property type="molecule type" value="Genomic_DNA"/>
</dbReference>
<dbReference type="SMR" id="A3Q0T3"/>
<dbReference type="KEGG" id="mjl:Mjls_2981"/>
<dbReference type="HOGENOM" id="CLU_032784_4_2_11"/>
<dbReference type="BioCyc" id="MSP164757:G1G8C-3004-MONOMER"/>
<dbReference type="UniPathway" id="UPA00068">
    <property type="reaction ID" value="UER00113"/>
</dbReference>
<dbReference type="GO" id="GO:0005737">
    <property type="term" value="C:cytoplasm"/>
    <property type="evidence" value="ECO:0007669"/>
    <property type="project" value="UniProtKB-SubCell"/>
</dbReference>
<dbReference type="GO" id="GO:0004055">
    <property type="term" value="F:argininosuccinate synthase activity"/>
    <property type="evidence" value="ECO:0007669"/>
    <property type="project" value="UniProtKB-UniRule"/>
</dbReference>
<dbReference type="GO" id="GO:0005524">
    <property type="term" value="F:ATP binding"/>
    <property type="evidence" value="ECO:0007669"/>
    <property type="project" value="UniProtKB-UniRule"/>
</dbReference>
<dbReference type="GO" id="GO:0000053">
    <property type="term" value="P:argininosuccinate metabolic process"/>
    <property type="evidence" value="ECO:0007669"/>
    <property type="project" value="TreeGrafter"/>
</dbReference>
<dbReference type="GO" id="GO:0006526">
    <property type="term" value="P:L-arginine biosynthetic process"/>
    <property type="evidence" value="ECO:0007669"/>
    <property type="project" value="UniProtKB-UniRule"/>
</dbReference>
<dbReference type="GO" id="GO:0000050">
    <property type="term" value="P:urea cycle"/>
    <property type="evidence" value="ECO:0007669"/>
    <property type="project" value="TreeGrafter"/>
</dbReference>
<dbReference type="CDD" id="cd01999">
    <property type="entry name" value="ASS"/>
    <property type="match status" value="1"/>
</dbReference>
<dbReference type="FunFam" id="3.40.50.620:FF:000038">
    <property type="entry name" value="Argininosuccinate synthase"/>
    <property type="match status" value="1"/>
</dbReference>
<dbReference type="FunFam" id="3.90.1260.10:FF:000006">
    <property type="entry name" value="Argininosuccinate synthase"/>
    <property type="match status" value="1"/>
</dbReference>
<dbReference type="Gene3D" id="3.90.1260.10">
    <property type="entry name" value="Argininosuccinate synthetase, chain A, domain 2"/>
    <property type="match status" value="1"/>
</dbReference>
<dbReference type="Gene3D" id="3.40.50.620">
    <property type="entry name" value="HUPs"/>
    <property type="match status" value="1"/>
</dbReference>
<dbReference type="Gene3D" id="1.20.5.470">
    <property type="entry name" value="Single helix bin"/>
    <property type="match status" value="1"/>
</dbReference>
<dbReference type="HAMAP" id="MF_00005">
    <property type="entry name" value="Arg_succ_synth_type1"/>
    <property type="match status" value="1"/>
</dbReference>
<dbReference type="InterPro" id="IPR048268">
    <property type="entry name" value="Arginosuc_syn_C"/>
</dbReference>
<dbReference type="InterPro" id="IPR048267">
    <property type="entry name" value="Arginosuc_syn_N"/>
</dbReference>
<dbReference type="InterPro" id="IPR001518">
    <property type="entry name" value="Arginosuc_synth"/>
</dbReference>
<dbReference type="InterPro" id="IPR018223">
    <property type="entry name" value="Arginosuc_synth_CS"/>
</dbReference>
<dbReference type="InterPro" id="IPR023434">
    <property type="entry name" value="Arginosuc_synth_type_1_subfam"/>
</dbReference>
<dbReference type="InterPro" id="IPR024074">
    <property type="entry name" value="AS_cat/multimer_dom_body"/>
</dbReference>
<dbReference type="InterPro" id="IPR014729">
    <property type="entry name" value="Rossmann-like_a/b/a_fold"/>
</dbReference>
<dbReference type="NCBIfam" id="TIGR00032">
    <property type="entry name" value="argG"/>
    <property type="match status" value="1"/>
</dbReference>
<dbReference type="NCBIfam" id="NF001770">
    <property type="entry name" value="PRK00509.1"/>
    <property type="match status" value="1"/>
</dbReference>
<dbReference type="PANTHER" id="PTHR11587">
    <property type="entry name" value="ARGININOSUCCINATE SYNTHASE"/>
    <property type="match status" value="1"/>
</dbReference>
<dbReference type="PANTHER" id="PTHR11587:SF2">
    <property type="entry name" value="ARGININOSUCCINATE SYNTHASE"/>
    <property type="match status" value="1"/>
</dbReference>
<dbReference type="Pfam" id="PF20979">
    <property type="entry name" value="Arginosuc_syn_C"/>
    <property type="match status" value="1"/>
</dbReference>
<dbReference type="Pfam" id="PF00764">
    <property type="entry name" value="Arginosuc_synth"/>
    <property type="match status" value="1"/>
</dbReference>
<dbReference type="SUPFAM" id="SSF52402">
    <property type="entry name" value="Adenine nucleotide alpha hydrolases-like"/>
    <property type="match status" value="1"/>
</dbReference>
<dbReference type="SUPFAM" id="SSF69864">
    <property type="entry name" value="Argininosuccinate synthetase, C-terminal domain"/>
    <property type="match status" value="1"/>
</dbReference>
<dbReference type="PROSITE" id="PS00564">
    <property type="entry name" value="ARGININOSUCCIN_SYN_1"/>
    <property type="match status" value="1"/>
</dbReference>
<dbReference type="PROSITE" id="PS00565">
    <property type="entry name" value="ARGININOSUCCIN_SYN_2"/>
    <property type="match status" value="1"/>
</dbReference>
<sequence>MSERVILAYSGGLDTSVAISWIGKETGREVVAVAIDLGQGGEDMDVVRQRALDCGAVEAVVVDARDEFAENYCLPAIQSNALYMDRYPLVSALSRPLIVKHLVDAAREHKGGIVAHGCTGKGNDQVRFEVGFASLAPDLEVLAPVRDYAWTREKAIAFAEENAIPINVTKRSPFSIDQNVWGRAVETGFLEHLWNAPTKDVYDYTEDPTLNWSTPDEVIVGFDKGVPVSVDGRDVTVLQAIEELNRRAGAQGVGRLDVVEDRLVGIKSREIYEAPGAMVLITAHTELEHVTLERELGRFKRTTDQKWGELVYDGLWFSPLKTALESFVAKTQEHVSGEIRLVLHGGHIAVNGRRSQESLYDFNLATYDEGDTFDQSSAKGFVHVHGLSSSISARRDLGIK</sequence>
<feature type="chain" id="PRO_1000000409" description="Argininosuccinate synthase">
    <location>
        <begin position="1"/>
        <end position="400"/>
    </location>
</feature>
<feature type="binding site" evidence="1">
    <location>
        <begin position="8"/>
        <end position="16"/>
    </location>
    <ligand>
        <name>ATP</name>
        <dbReference type="ChEBI" id="CHEBI:30616"/>
    </ligand>
</feature>
<feature type="binding site" evidence="1">
    <location>
        <position position="87"/>
    </location>
    <ligand>
        <name>L-citrulline</name>
        <dbReference type="ChEBI" id="CHEBI:57743"/>
    </ligand>
</feature>
<feature type="binding site" evidence="1">
    <location>
        <position position="117"/>
    </location>
    <ligand>
        <name>ATP</name>
        <dbReference type="ChEBI" id="CHEBI:30616"/>
    </ligand>
</feature>
<feature type="binding site" evidence="1">
    <location>
        <position position="119"/>
    </location>
    <ligand>
        <name>L-aspartate</name>
        <dbReference type="ChEBI" id="CHEBI:29991"/>
    </ligand>
</feature>
<feature type="binding site" evidence="1">
    <location>
        <position position="123"/>
    </location>
    <ligand>
        <name>L-aspartate</name>
        <dbReference type="ChEBI" id="CHEBI:29991"/>
    </ligand>
</feature>
<feature type="binding site" evidence="1">
    <location>
        <position position="123"/>
    </location>
    <ligand>
        <name>L-citrulline</name>
        <dbReference type="ChEBI" id="CHEBI:57743"/>
    </ligand>
</feature>
<feature type="binding site" evidence="1">
    <location>
        <position position="124"/>
    </location>
    <ligand>
        <name>L-aspartate</name>
        <dbReference type="ChEBI" id="CHEBI:29991"/>
    </ligand>
</feature>
<feature type="binding site" evidence="1">
    <location>
        <position position="127"/>
    </location>
    <ligand>
        <name>L-citrulline</name>
        <dbReference type="ChEBI" id="CHEBI:57743"/>
    </ligand>
</feature>
<feature type="binding site" evidence="1">
    <location>
        <position position="175"/>
    </location>
    <ligand>
        <name>L-citrulline</name>
        <dbReference type="ChEBI" id="CHEBI:57743"/>
    </ligand>
</feature>
<feature type="binding site" evidence="1">
    <location>
        <position position="260"/>
    </location>
    <ligand>
        <name>L-citrulline</name>
        <dbReference type="ChEBI" id="CHEBI:57743"/>
    </ligand>
</feature>
<feature type="binding site" evidence="1">
    <location>
        <position position="272"/>
    </location>
    <ligand>
        <name>L-citrulline</name>
        <dbReference type="ChEBI" id="CHEBI:57743"/>
    </ligand>
</feature>
<organism>
    <name type="scientific">Mycobacterium sp. (strain JLS)</name>
    <dbReference type="NCBI Taxonomy" id="164757"/>
    <lineage>
        <taxon>Bacteria</taxon>
        <taxon>Bacillati</taxon>
        <taxon>Actinomycetota</taxon>
        <taxon>Actinomycetes</taxon>
        <taxon>Mycobacteriales</taxon>
        <taxon>Mycobacteriaceae</taxon>
        <taxon>Mycobacterium</taxon>
    </lineage>
</organism>
<protein>
    <recommendedName>
        <fullName evidence="1">Argininosuccinate synthase</fullName>
        <ecNumber evidence="1">6.3.4.5</ecNumber>
    </recommendedName>
    <alternativeName>
        <fullName evidence="1">Citrulline--aspartate ligase</fullName>
    </alternativeName>
</protein>
<gene>
    <name evidence="1" type="primary">argG</name>
    <name type="ordered locus">Mjls_2981</name>
</gene>
<name>ASSY_MYCSJ</name>